<organism>
    <name type="scientific">Methanococcus maripaludis (strain C5 / ATCC BAA-1333)</name>
    <dbReference type="NCBI Taxonomy" id="402880"/>
    <lineage>
        <taxon>Archaea</taxon>
        <taxon>Methanobacteriati</taxon>
        <taxon>Methanobacteriota</taxon>
        <taxon>Methanomada group</taxon>
        <taxon>Methanococci</taxon>
        <taxon>Methanococcales</taxon>
        <taxon>Methanococcaceae</taxon>
        <taxon>Methanococcus</taxon>
    </lineage>
</organism>
<gene>
    <name evidence="1" type="primary">aroA</name>
    <name type="ordered locus">MmarC5_0385</name>
</gene>
<reference key="1">
    <citation type="submission" date="2007-03" db="EMBL/GenBank/DDBJ databases">
        <title>Complete sequence of chromosome of Methanococcus maripaludis C5.</title>
        <authorList>
            <consortium name="US DOE Joint Genome Institute"/>
            <person name="Copeland A."/>
            <person name="Lucas S."/>
            <person name="Lapidus A."/>
            <person name="Barry K."/>
            <person name="Glavina del Rio T."/>
            <person name="Dalin E."/>
            <person name="Tice H."/>
            <person name="Pitluck S."/>
            <person name="Chertkov O."/>
            <person name="Brettin T."/>
            <person name="Bruce D."/>
            <person name="Han C."/>
            <person name="Detter J.C."/>
            <person name="Schmutz J."/>
            <person name="Larimer F."/>
            <person name="Land M."/>
            <person name="Hauser L."/>
            <person name="Kyrpides N."/>
            <person name="Mikhailova N."/>
            <person name="Sieprawska-Lupa M."/>
            <person name="Whitman W.B."/>
            <person name="Richardson P."/>
        </authorList>
    </citation>
    <scope>NUCLEOTIDE SEQUENCE [LARGE SCALE GENOMIC DNA]</scope>
    <source>
        <strain>C5 / ATCC BAA-1333</strain>
    </source>
</reference>
<evidence type="ECO:0000255" key="1">
    <source>
        <dbReference type="HAMAP-Rule" id="MF_00210"/>
    </source>
</evidence>
<feature type="chain" id="PRO_0000325404" description="3-phosphoshikimate 1-carboxyvinyltransferase">
    <location>
        <begin position="1"/>
        <end position="429"/>
    </location>
</feature>
<feature type="active site" description="Proton acceptor" evidence="1">
    <location>
        <position position="311"/>
    </location>
</feature>
<feature type="binding site" evidence="1">
    <location>
        <position position="20"/>
    </location>
    <ligand>
        <name>3-phosphoshikimate</name>
        <dbReference type="ChEBI" id="CHEBI:145989"/>
    </ligand>
</feature>
<feature type="binding site" evidence="1">
    <location>
        <position position="20"/>
    </location>
    <ligand>
        <name>phosphoenolpyruvate</name>
        <dbReference type="ChEBI" id="CHEBI:58702"/>
    </ligand>
</feature>
<feature type="binding site" evidence="1">
    <location>
        <position position="21"/>
    </location>
    <ligand>
        <name>3-phosphoshikimate</name>
        <dbReference type="ChEBI" id="CHEBI:145989"/>
    </ligand>
</feature>
<feature type="binding site" evidence="1">
    <location>
        <position position="25"/>
    </location>
    <ligand>
        <name>3-phosphoshikimate</name>
        <dbReference type="ChEBI" id="CHEBI:145989"/>
    </ligand>
</feature>
<feature type="binding site" evidence="1">
    <location>
        <position position="89"/>
    </location>
    <ligand>
        <name>phosphoenolpyruvate</name>
        <dbReference type="ChEBI" id="CHEBI:58702"/>
    </ligand>
</feature>
<feature type="binding site" evidence="1">
    <location>
        <position position="118"/>
    </location>
    <ligand>
        <name>phosphoenolpyruvate</name>
        <dbReference type="ChEBI" id="CHEBI:58702"/>
    </ligand>
</feature>
<feature type="binding site" evidence="1">
    <location>
        <position position="164"/>
    </location>
    <ligand>
        <name>3-phosphoshikimate</name>
        <dbReference type="ChEBI" id="CHEBI:145989"/>
    </ligand>
</feature>
<feature type="binding site" evidence="1">
    <location>
        <position position="165"/>
    </location>
    <ligand>
        <name>3-phosphoshikimate</name>
        <dbReference type="ChEBI" id="CHEBI:145989"/>
    </ligand>
</feature>
<feature type="binding site" evidence="1">
    <location>
        <position position="166"/>
    </location>
    <ligand>
        <name>3-phosphoshikimate</name>
        <dbReference type="ChEBI" id="CHEBI:145989"/>
    </ligand>
</feature>
<feature type="binding site" evidence="1">
    <location>
        <position position="166"/>
    </location>
    <ligand>
        <name>phosphoenolpyruvate</name>
        <dbReference type="ChEBI" id="CHEBI:58702"/>
    </ligand>
</feature>
<feature type="binding site" evidence="1">
    <location>
        <position position="192"/>
    </location>
    <ligand>
        <name>3-phosphoshikimate</name>
        <dbReference type="ChEBI" id="CHEBI:145989"/>
    </ligand>
</feature>
<feature type="binding site" evidence="1">
    <location>
        <position position="311"/>
    </location>
    <ligand>
        <name>3-phosphoshikimate</name>
        <dbReference type="ChEBI" id="CHEBI:145989"/>
    </ligand>
</feature>
<feature type="binding site" evidence="1">
    <location>
        <position position="338"/>
    </location>
    <ligand>
        <name>3-phosphoshikimate</name>
        <dbReference type="ChEBI" id="CHEBI:145989"/>
    </ligand>
</feature>
<feature type="binding site" evidence="1">
    <location>
        <position position="342"/>
    </location>
    <ligand>
        <name>phosphoenolpyruvate</name>
        <dbReference type="ChEBI" id="CHEBI:58702"/>
    </ligand>
</feature>
<feature type="binding site" evidence="1">
    <location>
        <position position="384"/>
    </location>
    <ligand>
        <name>phosphoenolpyruvate</name>
        <dbReference type="ChEBI" id="CHEBI:58702"/>
    </ligand>
</feature>
<accession>A4FWX2</accession>
<dbReference type="EC" id="2.5.1.19" evidence="1"/>
<dbReference type="EMBL" id="CP000609">
    <property type="protein sequence ID" value="ABO34701.1"/>
    <property type="molecule type" value="Genomic_DNA"/>
</dbReference>
<dbReference type="RefSeq" id="WP_011868156.1">
    <property type="nucleotide sequence ID" value="NC_009135.1"/>
</dbReference>
<dbReference type="SMR" id="A4FWX2"/>
<dbReference type="STRING" id="402880.MmarC5_0385"/>
<dbReference type="GeneID" id="4928948"/>
<dbReference type="KEGG" id="mmq:MmarC5_0385"/>
<dbReference type="eggNOG" id="arCOG04134">
    <property type="taxonomic scope" value="Archaea"/>
</dbReference>
<dbReference type="HOGENOM" id="CLU_024321_0_0_2"/>
<dbReference type="OrthoDB" id="43788at2157"/>
<dbReference type="UniPathway" id="UPA00053"/>
<dbReference type="Proteomes" id="UP000000253">
    <property type="component" value="Chromosome"/>
</dbReference>
<dbReference type="GO" id="GO:0005737">
    <property type="term" value="C:cytoplasm"/>
    <property type="evidence" value="ECO:0007669"/>
    <property type="project" value="UniProtKB-SubCell"/>
</dbReference>
<dbReference type="GO" id="GO:0003866">
    <property type="term" value="F:3-phosphoshikimate 1-carboxyvinyltransferase activity"/>
    <property type="evidence" value="ECO:0007669"/>
    <property type="project" value="UniProtKB-UniRule"/>
</dbReference>
<dbReference type="GO" id="GO:0008652">
    <property type="term" value="P:amino acid biosynthetic process"/>
    <property type="evidence" value="ECO:0007669"/>
    <property type="project" value="UniProtKB-KW"/>
</dbReference>
<dbReference type="GO" id="GO:0009073">
    <property type="term" value="P:aromatic amino acid family biosynthetic process"/>
    <property type="evidence" value="ECO:0007669"/>
    <property type="project" value="UniProtKB-KW"/>
</dbReference>
<dbReference type="GO" id="GO:0009423">
    <property type="term" value="P:chorismate biosynthetic process"/>
    <property type="evidence" value="ECO:0007669"/>
    <property type="project" value="UniProtKB-UniRule"/>
</dbReference>
<dbReference type="CDD" id="cd01556">
    <property type="entry name" value="EPSP_synthase"/>
    <property type="match status" value="1"/>
</dbReference>
<dbReference type="FunFam" id="3.65.10.10:FF:000012">
    <property type="entry name" value="Pentafunctional AROM polypeptide"/>
    <property type="match status" value="1"/>
</dbReference>
<dbReference type="Gene3D" id="3.65.10.10">
    <property type="entry name" value="Enolpyruvate transferase domain"/>
    <property type="match status" value="2"/>
</dbReference>
<dbReference type="HAMAP" id="MF_00210">
    <property type="entry name" value="EPSP_synth"/>
    <property type="match status" value="1"/>
</dbReference>
<dbReference type="InterPro" id="IPR001986">
    <property type="entry name" value="Enolpyruvate_Tfrase_dom"/>
</dbReference>
<dbReference type="InterPro" id="IPR036968">
    <property type="entry name" value="Enolpyruvate_Tfrase_sf"/>
</dbReference>
<dbReference type="InterPro" id="IPR006264">
    <property type="entry name" value="EPSP_synthase"/>
</dbReference>
<dbReference type="InterPro" id="IPR023193">
    <property type="entry name" value="EPSP_synthase_CS"/>
</dbReference>
<dbReference type="InterPro" id="IPR013792">
    <property type="entry name" value="RNA3'P_cycl/enolpyr_Trfase_a/b"/>
</dbReference>
<dbReference type="NCBIfam" id="TIGR01356">
    <property type="entry name" value="aroA"/>
    <property type="match status" value="1"/>
</dbReference>
<dbReference type="PANTHER" id="PTHR21090">
    <property type="entry name" value="AROM/DEHYDROQUINATE SYNTHASE"/>
    <property type="match status" value="1"/>
</dbReference>
<dbReference type="PANTHER" id="PTHR21090:SF5">
    <property type="entry name" value="PENTAFUNCTIONAL AROM POLYPEPTIDE"/>
    <property type="match status" value="1"/>
</dbReference>
<dbReference type="Pfam" id="PF00275">
    <property type="entry name" value="EPSP_synthase"/>
    <property type="match status" value="1"/>
</dbReference>
<dbReference type="PIRSF" id="PIRSF000505">
    <property type="entry name" value="EPSPS"/>
    <property type="match status" value="1"/>
</dbReference>
<dbReference type="SUPFAM" id="SSF55205">
    <property type="entry name" value="EPT/RTPC-like"/>
    <property type="match status" value="1"/>
</dbReference>
<dbReference type="PROSITE" id="PS00104">
    <property type="entry name" value="EPSP_SYNTHASE_1"/>
    <property type="match status" value="1"/>
</dbReference>
<dbReference type="PROSITE" id="PS00885">
    <property type="entry name" value="EPSP_SYNTHASE_2"/>
    <property type="match status" value="1"/>
</dbReference>
<comment type="function">
    <text evidence="1">Catalyzes the transfer of the enolpyruvyl moiety of phosphoenolpyruvate (PEP) to the 5-hydroxyl of shikimate-3-phosphate (S3P) to produce enolpyruvyl shikimate-3-phosphate and inorganic phosphate.</text>
</comment>
<comment type="catalytic activity">
    <reaction evidence="1">
        <text>3-phosphoshikimate + phosphoenolpyruvate = 5-O-(1-carboxyvinyl)-3-phosphoshikimate + phosphate</text>
        <dbReference type="Rhea" id="RHEA:21256"/>
        <dbReference type="ChEBI" id="CHEBI:43474"/>
        <dbReference type="ChEBI" id="CHEBI:57701"/>
        <dbReference type="ChEBI" id="CHEBI:58702"/>
        <dbReference type="ChEBI" id="CHEBI:145989"/>
        <dbReference type="EC" id="2.5.1.19"/>
    </reaction>
    <physiologicalReaction direction="left-to-right" evidence="1">
        <dbReference type="Rhea" id="RHEA:21257"/>
    </physiologicalReaction>
</comment>
<comment type="pathway">
    <text evidence="1">Metabolic intermediate biosynthesis; chorismate biosynthesis.</text>
</comment>
<comment type="subunit">
    <text evidence="1">Monomer.</text>
</comment>
<comment type="subcellular location">
    <subcellularLocation>
        <location evidence="1">Cytoplasm</location>
    </subcellularLocation>
</comment>
<comment type="similarity">
    <text evidence="1">Belongs to the EPSP synthase family.</text>
</comment>
<protein>
    <recommendedName>
        <fullName evidence="1">3-phosphoshikimate 1-carboxyvinyltransferase</fullName>
        <ecNumber evidence="1">2.5.1.19</ecNumber>
    </recommendedName>
    <alternativeName>
        <fullName evidence="1">5-enolpyruvylshikimate-3-phosphate synthase</fullName>
        <shortName evidence="1">EPSP synthase</shortName>
        <shortName evidence="1">EPSPS</shortName>
    </alternativeName>
</protein>
<keyword id="KW-0028">Amino-acid biosynthesis</keyword>
<keyword id="KW-0057">Aromatic amino acid biosynthesis</keyword>
<keyword id="KW-0963">Cytoplasm</keyword>
<keyword id="KW-0808">Transferase</keyword>
<proteinExistence type="inferred from homology"/>
<name>AROA_METM5</name>
<sequence>MLVVKKTPKIKGILSAPPSKSYTHRAVICASLANGISNLKNPLNGADCLSSAHACEMFGAEIELSNETWVVRGSELKTPDNIVDIGNSGTTLRILTGISSQISNGYTVLTGDDSIRKRPMQPLLDALNQLGLTCFSTKNNGTAPIVVKSGKISNNVVEIRGDVSSQFITSIMMTLPFSENDSEIVLTTPLKSEPYLNITIDVLDKFGVKIEKNEEKNKSGYKIKGNQKYLPCDYTIEGDYSSASYLVAAGVLLNSDIVIKNVFKDSKQGDREIIEIVKKMGANVEINEDHVKITGPYKLKGIEIDVTDIPDLVPTIAVLGCFADGKTVVYNGEHVRLKECDRLAACTTELSKMGAEIEEKKDGLIITGVHKLNGAKLKTYHDHRLVMAFTIAGMLADGETIIEGEDSVKISFPDFVDNMKSIGSNIEVI</sequence>